<proteinExistence type="inferred from homology"/>
<name>LIPA_TRYB9</name>
<gene>
    <name type="ORF">TbgDal_X18270</name>
</gene>
<comment type="function">
    <text evidence="1">Catalyzes the radical-mediated insertion of two sulfur atoms into the C-6 and C-8 positions of the octanoyl moiety bound to the lipoyl domains of lipoate-dependent enzymes, thereby converting the octanoylated domains into lipoylated derivatives.</text>
</comment>
<comment type="catalytic activity">
    <reaction evidence="1">
        <text>[[Fe-S] cluster scaffold protein carrying a second [4Fe-4S](2+) cluster] + N(6)-octanoyl-L-lysyl-[protein] + 2 oxidized [2Fe-2S]-[ferredoxin] + 2 S-adenosyl-L-methionine + 4 H(+) = [[Fe-S] cluster scaffold protein] + N(6)-[(R)-dihydrolipoyl]-L-lysyl-[protein] + 4 Fe(3+) + 2 hydrogen sulfide + 2 5'-deoxyadenosine + 2 L-methionine + 2 reduced [2Fe-2S]-[ferredoxin]</text>
        <dbReference type="Rhea" id="RHEA:16585"/>
        <dbReference type="Rhea" id="RHEA-COMP:9928"/>
        <dbReference type="Rhea" id="RHEA-COMP:10000"/>
        <dbReference type="Rhea" id="RHEA-COMP:10001"/>
        <dbReference type="Rhea" id="RHEA-COMP:10475"/>
        <dbReference type="Rhea" id="RHEA-COMP:14568"/>
        <dbReference type="Rhea" id="RHEA-COMP:14569"/>
        <dbReference type="ChEBI" id="CHEBI:15378"/>
        <dbReference type="ChEBI" id="CHEBI:17319"/>
        <dbReference type="ChEBI" id="CHEBI:29034"/>
        <dbReference type="ChEBI" id="CHEBI:29919"/>
        <dbReference type="ChEBI" id="CHEBI:33722"/>
        <dbReference type="ChEBI" id="CHEBI:33737"/>
        <dbReference type="ChEBI" id="CHEBI:33738"/>
        <dbReference type="ChEBI" id="CHEBI:57844"/>
        <dbReference type="ChEBI" id="CHEBI:59789"/>
        <dbReference type="ChEBI" id="CHEBI:78809"/>
        <dbReference type="ChEBI" id="CHEBI:83100"/>
        <dbReference type="EC" id="2.8.1.8"/>
    </reaction>
</comment>
<comment type="cofactor">
    <cofactor evidence="1">
        <name>[4Fe-4S] cluster</name>
        <dbReference type="ChEBI" id="CHEBI:49883"/>
    </cofactor>
    <text evidence="1">Binds 2 [4Fe-4S] clusters per subunit. One cluster is coordinated with 3 cysteines and an exchangeable S-adenosyl-L-methionine.</text>
</comment>
<comment type="pathway">
    <text evidence="1">Protein modification; protein lipoylation via endogenous pathway; protein N(6)-(lipoyl)lysine from octanoyl-[acyl-carrier-protein]: step 2/2.</text>
</comment>
<comment type="subcellular location">
    <subcellularLocation>
        <location evidence="1">Mitochondrion</location>
    </subcellularLocation>
</comment>
<comment type="miscellaneous">
    <text evidence="1">This protein may be expected to contain an N-terminal transit peptide but none has been predicted.</text>
</comment>
<comment type="similarity">
    <text evidence="1">Belongs to the radical SAM superfamily. Lipoyl synthase family.</text>
</comment>
<organism>
    <name type="scientific">Trypanosoma brucei gambiense (strain MHOM/CI/86/DAL972)</name>
    <dbReference type="NCBI Taxonomy" id="679716"/>
    <lineage>
        <taxon>Eukaryota</taxon>
        <taxon>Discoba</taxon>
        <taxon>Euglenozoa</taxon>
        <taxon>Kinetoplastea</taxon>
        <taxon>Metakinetoplastina</taxon>
        <taxon>Trypanosomatida</taxon>
        <taxon>Trypanosomatidae</taxon>
        <taxon>Trypanosoma</taxon>
    </lineage>
</organism>
<protein>
    <recommendedName>
        <fullName evidence="1">Lipoyl synthase, mitochondrial</fullName>
        <ecNumber evidence="1">2.8.1.8</ecNumber>
    </recommendedName>
    <alternativeName>
        <fullName evidence="1">Lipoate synthase</fullName>
        <shortName evidence="1">LS</shortName>
        <shortName evidence="1">Lip-syn</shortName>
    </alternativeName>
    <alternativeName>
        <fullName evidence="1">Lipoic acid synthase</fullName>
    </alternativeName>
</protein>
<accession>D0A0G6</accession>
<sequence>MFQRWSFALCRPIVAAAQVSQQQVPPSEEPRNESGAANPPLVKEEFLRQFRERLANDKTGRNSLEGFLDLPENLPPTAASIGPLKRGKEPLPPWLKLKVPMGASRQPRFNKIRRNMREKRLATVCEEAKCPNIGECWGGGDEEGDGTATATIMVMGAHCTRGCRFCSVMTSRTPPPLDPEEPRKTADAVADMGVEYIVMTMVDRDDLADGGAAHVVRCVTAVKERNPGLLLEALVGDFHGDLKLVEMVAGSPLNVYAHNIECVERITPNVRDRRASYRQSLKVLEHVNNFTKGAMLTKSSIMLGLGEKEEEVRQTLRDLRTAGVSAVTLGQYLQPSRTRLKVSRYAHPKEFEMWEKEALDMGFLYCASGPMVRSSYRAGEYYIKNILKQRETVEAPSVSDGGNEPKDSE</sequence>
<reference key="1">
    <citation type="journal article" date="2010" name="PLoS Negl. Trop. Dis.">
        <title>The genome sequence of Trypanosoma brucei gambiense, causative agent of chronic human african trypanosomiasis.</title>
        <authorList>
            <person name="Jackson A.P."/>
            <person name="Sanders M."/>
            <person name="Berry A."/>
            <person name="McQuillan J."/>
            <person name="Aslett M.A."/>
            <person name="Quail M.A."/>
            <person name="Chukualim B."/>
            <person name="Capewell P."/>
            <person name="MacLeod A."/>
            <person name="Melville S.E."/>
            <person name="Gibson W."/>
            <person name="Barry J.D."/>
            <person name="Berriman M."/>
            <person name="Hertz-Fowler C."/>
        </authorList>
    </citation>
    <scope>NUCLEOTIDE SEQUENCE [LARGE SCALE GENOMIC DNA]</scope>
    <source>
        <strain>MHOM/CI/86/DAL972</strain>
    </source>
</reference>
<evidence type="ECO:0000255" key="1">
    <source>
        <dbReference type="HAMAP-Rule" id="MF_03123"/>
    </source>
</evidence>
<evidence type="ECO:0000255" key="2">
    <source>
        <dbReference type="PROSITE-ProRule" id="PRU01266"/>
    </source>
</evidence>
<evidence type="ECO:0000256" key="3">
    <source>
        <dbReference type="SAM" id="MobiDB-lite"/>
    </source>
</evidence>
<dbReference type="EC" id="2.8.1.8" evidence="1"/>
<dbReference type="EMBL" id="FN554973">
    <property type="protein sequence ID" value="CBH16724.1"/>
    <property type="molecule type" value="Genomic_DNA"/>
</dbReference>
<dbReference type="RefSeq" id="XP_011778988.1">
    <property type="nucleotide sequence ID" value="XM_011780686.1"/>
</dbReference>
<dbReference type="SMR" id="D0A0G6"/>
<dbReference type="GeneID" id="23865073"/>
<dbReference type="KEGG" id="tbg:TbgDal_X18270"/>
<dbReference type="VEuPathDB" id="TriTrypDB:Tbg972.10.18270"/>
<dbReference type="OrthoDB" id="4072at5690"/>
<dbReference type="UniPathway" id="UPA00538">
    <property type="reaction ID" value="UER00593"/>
</dbReference>
<dbReference type="Proteomes" id="UP000002316">
    <property type="component" value="Chromosome 10"/>
</dbReference>
<dbReference type="GO" id="GO:0005739">
    <property type="term" value="C:mitochondrion"/>
    <property type="evidence" value="ECO:0007669"/>
    <property type="project" value="UniProtKB-SubCell"/>
</dbReference>
<dbReference type="GO" id="GO:0051539">
    <property type="term" value="F:4 iron, 4 sulfur cluster binding"/>
    <property type="evidence" value="ECO:0007669"/>
    <property type="project" value="UniProtKB-UniRule"/>
</dbReference>
<dbReference type="GO" id="GO:0016992">
    <property type="term" value="F:lipoate synthase activity"/>
    <property type="evidence" value="ECO:0007669"/>
    <property type="project" value="UniProtKB-UniRule"/>
</dbReference>
<dbReference type="GO" id="GO:0046872">
    <property type="term" value="F:metal ion binding"/>
    <property type="evidence" value="ECO:0007669"/>
    <property type="project" value="UniProtKB-KW"/>
</dbReference>
<dbReference type="CDD" id="cd01335">
    <property type="entry name" value="Radical_SAM"/>
    <property type="match status" value="1"/>
</dbReference>
<dbReference type="FunFam" id="3.20.20.70:FF:000306">
    <property type="entry name" value="Lipoyl synthase, mitochondrial"/>
    <property type="match status" value="1"/>
</dbReference>
<dbReference type="Gene3D" id="3.20.20.70">
    <property type="entry name" value="Aldolase class I"/>
    <property type="match status" value="1"/>
</dbReference>
<dbReference type="HAMAP" id="MF_00206">
    <property type="entry name" value="Lipoyl_synth"/>
    <property type="match status" value="1"/>
</dbReference>
<dbReference type="InterPro" id="IPR013785">
    <property type="entry name" value="Aldolase_TIM"/>
</dbReference>
<dbReference type="InterPro" id="IPR006638">
    <property type="entry name" value="Elp3/MiaA/NifB-like_rSAM"/>
</dbReference>
<dbReference type="InterPro" id="IPR031691">
    <property type="entry name" value="LIAS_N"/>
</dbReference>
<dbReference type="InterPro" id="IPR003698">
    <property type="entry name" value="Lipoyl_synth"/>
</dbReference>
<dbReference type="InterPro" id="IPR007197">
    <property type="entry name" value="rSAM"/>
</dbReference>
<dbReference type="NCBIfam" id="TIGR00510">
    <property type="entry name" value="lipA"/>
    <property type="match status" value="1"/>
</dbReference>
<dbReference type="NCBIfam" id="NF004019">
    <property type="entry name" value="PRK05481.1"/>
    <property type="match status" value="1"/>
</dbReference>
<dbReference type="NCBIfam" id="NF009544">
    <property type="entry name" value="PRK12928.1"/>
    <property type="match status" value="1"/>
</dbReference>
<dbReference type="PANTHER" id="PTHR10949">
    <property type="entry name" value="LIPOYL SYNTHASE"/>
    <property type="match status" value="1"/>
</dbReference>
<dbReference type="PANTHER" id="PTHR10949:SF0">
    <property type="entry name" value="LIPOYL SYNTHASE, MITOCHONDRIAL"/>
    <property type="match status" value="1"/>
</dbReference>
<dbReference type="Pfam" id="PF16881">
    <property type="entry name" value="LIAS_N"/>
    <property type="match status" value="1"/>
</dbReference>
<dbReference type="Pfam" id="PF04055">
    <property type="entry name" value="Radical_SAM"/>
    <property type="match status" value="1"/>
</dbReference>
<dbReference type="SFLD" id="SFLDF00271">
    <property type="entry name" value="lipoyl_synthase"/>
    <property type="match status" value="1"/>
</dbReference>
<dbReference type="SFLD" id="SFLDG01058">
    <property type="entry name" value="lipoyl_synthase_like"/>
    <property type="match status" value="1"/>
</dbReference>
<dbReference type="SMART" id="SM00729">
    <property type="entry name" value="Elp3"/>
    <property type="match status" value="1"/>
</dbReference>
<dbReference type="SUPFAM" id="SSF102114">
    <property type="entry name" value="Radical SAM enzymes"/>
    <property type="match status" value="1"/>
</dbReference>
<dbReference type="PROSITE" id="PS51918">
    <property type="entry name" value="RADICAL_SAM"/>
    <property type="match status" value="1"/>
</dbReference>
<keyword id="KW-0004">4Fe-4S</keyword>
<keyword id="KW-0408">Iron</keyword>
<keyword id="KW-0411">Iron-sulfur</keyword>
<keyword id="KW-0479">Metal-binding</keyword>
<keyword id="KW-0496">Mitochondrion</keyword>
<keyword id="KW-0949">S-adenosyl-L-methionine</keyword>
<keyword id="KW-0808">Transferase</keyword>
<feature type="chain" id="PRO_0000398240" description="Lipoyl synthase, mitochondrial">
    <location>
        <begin position="1"/>
        <end position="409"/>
    </location>
</feature>
<feature type="domain" description="Radical SAM core" evidence="2">
    <location>
        <begin position="142"/>
        <end position="364"/>
    </location>
</feature>
<feature type="region of interest" description="Disordered" evidence="3">
    <location>
        <begin position="21"/>
        <end position="41"/>
    </location>
</feature>
<feature type="binding site" evidence="1">
    <location>
        <position position="125"/>
    </location>
    <ligand>
        <name>[4Fe-4S] cluster</name>
        <dbReference type="ChEBI" id="CHEBI:49883"/>
        <label>1</label>
    </ligand>
</feature>
<feature type="binding site" evidence="1">
    <location>
        <position position="130"/>
    </location>
    <ligand>
        <name>[4Fe-4S] cluster</name>
        <dbReference type="ChEBI" id="CHEBI:49883"/>
        <label>1</label>
    </ligand>
</feature>
<feature type="binding site" evidence="1">
    <location>
        <position position="136"/>
    </location>
    <ligand>
        <name>[4Fe-4S] cluster</name>
        <dbReference type="ChEBI" id="CHEBI:49883"/>
        <label>1</label>
    </ligand>
</feature>
<feature type="binding site" evidence="1">
    <location>
        <position position="159"/>
    </location>
    <ligand>
        <name>[4Fe-4S] cluster</name>
        <dbReference type="ChEBI" id="CHEBI:49883"/>
        <label>2</label>
        <note>4Fe-4S-S-AdoMet</note>
    </ligand>
</feature>
<feature type="binding site" evidence="1">
    <location>
        <position position="163"/>
    </location>
    <ligand>
        <name>[4Fe-4S] cluster</name>
        <dbReference type="ChEBI" id="CHEBI:49883"/>
        <label>2</label>
        <note>4Fe-4S-S-AdoMet</note>
    </ligand>
</feature>
<feature type="binding site" evidence="1">
    <location>
        <position position="166"/>
    </location>
    <ligand>
        <name>[4Fe-4S] cluster</name>
        <dbReference type="ChEBI" id="CHEBI:49883"/>
        <label>2</label>
        <note>4Fe-4S-S-AdoMet</note>
    </ligand>
</feature>
<feature type="binding site" evidence="1">
    <location>
        <position position="375"/>
    </location>
    <ligand>
        <name>[4Fe-4S] cluster</name>
        <dbReference type="ChEBI" id="CHEBI:49883"/>
        <label>1</label>
    </ligand>
</feature>